<proteinExistence type="evidence at protein level"/>
<gene>
    <name type="primary">RIO2</name>
    <name type="ordered locus">YNL207W</name>
    <name type="ORF">N1342</name>
</gene>
<feature type="chain" id="PRO_0000213532" description="Serine/threonine-protein kinase RIO2">
    <location>
        <begin position="1"/>
        <end position="425"/>
    </location>
</feature>
<feature type="domain" description="Protein kinase">
    <location>
        <begin position="95"/>
        <end position="257"/>
    </location>
</feature>
<feature type="region of interest" description="Disordered" evidence="2">
    <location>
        <begin position="350"/>
        <end position="420"/>
    </location>
</feature>
<feature type="compositionally biased region" description="Acidic residues" evidence="2">
    <location>
        <begin position="354"/>
        <end position="400"/>
    </location>
</feature>
<feature type="active site" description="Proton acceptor" evidence="1">
    <location>
        <position position="229"/>
    </location>
</feature>
<feature type="binding site" evidence="1">
    <location>
        <position position="123"/>
    </location>
    <ligand>
        <name>ATP</name>
        <dbReference type="ChEBI" id="CHEBI:30616"/>
    </ligand>
</feature>
<feature type="modified residue" description="Phosphoserine" evidence="11">
    <location>
        <position position="346"/>
    </location>
</feature>
<feature type="mutagenesis site" description="In RIO2-1; nuclear export of ribosomal 40S subunits impaired; when associated with V-186, H-210, D-364, G-371 and G-417." evidence="4">
    <original>Y</original>
    <variation>H</variation>
    <location>
        <position position="73"/>
    </location>
</feature>
<feature type="mutagenesis site" description="No change in activity." evidence="5">
    <original>K</original>
    <variation>I</variation>
    <location>
        <position position="105"/>
    </location>
</feature>
<feature type="mutagenesis site" description="In RIO2-1; nuclear export of ribosomal 40S subunits impaired; when associated with H-73, H-210, D-364, G-371 and G-417." evidence="4">
    <original>I</original>
    <variation>V</variation>
    <location>
        <position position="186"/>
    </location>
</feature>
<feature type="mutagenesis site" description="In RIO2-1; nuclear export of ribosomal 40S subunits impaired; when associated with H-73, V-186, D-364, G-371 and G-417." evidence="4">
    <original>Y</original>
    <variation>H</variation>
    <location>
        <position position="210"/>
    </location>
</feature>
<feature type="mutagenesis site" description="No change in activity." evidence="5">
    <original>H</original>
    <variation>F</variation>
    <location>
        <position position="227"/>
    </location>
</feature>
<feature type="mutagenesis site" description="Decrease in activity." evidence="5">
    <original>D</original>
    <variation>A</variation>
    <location>
        <position position="229"/>
    </location>
</feature>
<feature type="mutagenesis site" description="In RIO2-1; nuclear export of ribosomal 40S subunits impaired; when associated with H-73, V-186, H-210, G-371 and G-417." evidence="4">
    <original>E</original>
    <variation>D</variation>
    <location>
        <position position="364"/>
    </location>
</feature>
<feature type="mutagenesis site" description="In RIO2-1; nuclear export of ribosomal 40S subunits impaired; when associated with H-73, V-186, H-210, D-364 and G-417." evidence="4">
    <original>D</original>
    <variation>G</variation>
    <location>
        <position position="371"/>
    </location>
</feature>
<feature type="mutagenesis site" description="In RIO2-1; nuclear export of ribosomal 40S subunits impaired; when associated with H-73, V-186, H-210, D-364 and G-371." evidence="4">
    <original>D</original>
    <variation>G</variation>
    <location>
        <position position="417"/>
    </location>
</feature>
<feature type="helix" evidence="12">
    <location>
        <begin position="5"/>
        <end position="10"/>
    </location>
</feature>
<feature type="helix" evidence="13">
    <location>
        <begin position="14"/>
        <end position="21"/>
    </location>
</feature>
<feature type="helix" evidence="13">
    <location>
        <begin position="22"/>
        <end position="25"/>
    </location>
</feature>
<feature type="strand" evidence="12">
    <location>
        <begin position="29"/>
        <end position="32"/>
    </location>
</feature>
<feature type="helix" evidence="13">
    <location>
        <begin position="36"/>
        <end position="39"/>
    </location>
</feature>
<feature type="helix" evidence="13">
    <location>
        <begin position="48"/>
        <end position="56"/>
    </location>
</feature>
<feature type="strand" evidence="12">
    <location>
        <begin position="61"/>
        <end position="67"/>
    </location>
</feature>
<feature type="strand" evidence="12">
    <location>
        <begin position="70"/>
        <end position="75"/>
    </location>
</feature>
<feature type="helix" evidence="13">
    <location>
        <begin position="79"/>
        <end position="82"/>
    </location>
</feature>
<feature type="turn" evidence="13">
    <location>
        <begin position="83"/>
        <end position="85"/>
    </location>
</feature>
<feature type="helix" evidence="13">
    <location>
        <begin position="86"/>
        <end position="91"/>
    </location>
</feature>
<feature type="strand" evidence="12">
    <location>
        <begin position="96"/>
        <end position="103"/>
    </location>
</feature>
<feature type="strand" evidence="13">
    <location>
        <begin position="105"/>
        <end position="110"/>
    </location>
</feature>
<feature type="strand" evidence="13">
    <location>
        <begin position="121"/>
        <end position="125"/>
    </location>
</feature>
<feature type="helix" evidence="13">
    <location>
        <begin position="154"/>
        <end position="171"/>
    </location>
</feature>
<feature type="strand" evidence="13">
    <location>
        <begin position="179"/>
        <end position="183"/>
    </location>
</feature>
<feature type="strand" evidence="13">
    <location>
        <begin position="186"/>
        <end position="189"/>
    </location>
</feature>
<feature type="strand" evidence="13">
    <location>
        <begin position="194"/>
        <end position="196"/>
    </location>
</feature>
<feature type="helix" evidence="13">
    <location>
        <begin position="197"/>
        <end position="199"/>
    </location>
</feature>
<feature type="helix" evidence="13">
    <location>
        <begin position="206"/>
        <end position="223"/>
    </location>
</feature>
<feature type="strand" evidence="12">
    <location>
        <begin position="225"/>
        <end position="228"/>
    </location>
</feature>
<feature type="strand" evidence="13">
    <location>
        <begin position="234"/>
        <end position="237"/>
    </location>
</feature>
<feature type="strand" evidence="12">
    <location>
        <begin position="242"/>
        <end position="244"/>
    </location>
</feature>
<feature type="strand" evidence="12">
    <location>
        <begin position="247"/>
        <end position="251"/>
    </location>
</feature>
<feature type="strand" evidence="12">
    <location>
        <begin position="254"/>
        <end position="259"/>
    </location>
</feature>
<feature type="helix" evidence="13">
    <location>
        <begin position="265"/>
        <end position="282"/>
    </location>
</feature>
<feature type="helix" evidence="12">
    <location>
        <begin position="295"/>
        <end position="301"/>
    </location>
</feature>
<feature type="strand" evidence="13">
    <location>
        <begin position="304"/>
        <end position="308"/>
    </location>
</feature>
<feature type="helix" evidence="13">
    <location>
        <begin position="321"/>
        <end position="324"/>
    </location>
</feature>
<organism>
    <name type="scientific">Saccharomyces cerevisiae (strain ATCC 204508 / S288c)</name>
    <name type="common">Baker's yeast</name>
    <dbReference type="NCBI Taxonomy" id="559292"/>
    <lineage>
        <taxon>Eukaryota</taxon>
        <taxon>Fungi</taxon>
        <taxon>Dikarya</taxon>
        <taxon>Ascomycota</taxon>
        <taxon>Saccharomycotina</taxon>
        <taxon>Saccharomycetes</taxon>
        <taxon>Saccharomycetales</taxon>
        <taxon>Saccharomycetaceae</taxon>
        <taxon>Saccharomyces</taxon>
    </lineage>
</organism>
<keyword id="KW-0002">3D-structure</keyword>
<keyword id="KW-0067">ATP-binding</keyword>
<keyword id="KW-0963">Cytoplasm</keyword>
<keyword id="KW-0418">Kinase</keyword>
<keyword id="KW-0460">Magnesium</keyword>
<keyword id="KW-0479">Metal-binding</keyword>
<keyword id="KW-0547">Nucleotide-binding</keyword>
<keyword id="KW-0539">Nucleus</keyword>
<keyword id="KW-0597">Phosphoprotein</keyword>
<keyword id="KW-1185">Reference proteome</keyword>
<keyword id="KW-0690">Ribosome biogenesis</keyword>
<keyword id="KW-0723">Serine/threonine-protein kinase</keyword>
<keyword id="KW-0808">Transferase</keyword>
<reference key="1">
    <citation type="journal article" date="1994" name="Yeast">
        <title>A 21.7 kb DNA segment on the left arm of yeast chromosome XIV carries WHI3, GCR2, SPX18, SPX19, an homologue to the heat shock gene SSB1 and 8 new open reading frames of unknown function.</title>
        <authorList>
            <person name="Jonniaux J.-L."/>
            <person name="Coster F."/>
            <person name="Purnelle B."/>
            <person name="Goffeau A."/>
        </authorList>
    </citation>
    <scope>NUCLEOTIDE SEQUENCE [GENOMIC DNA]</scope>
    <source>
        <strain>ATCC 96604 / S288c / FY1679</strain>
    </source>
</reference>
<reference key="2">
    <citation type="journal article" date="1997" name="Nature">
        <title>The nucleotide sequence of Saccharomyces cerevisiae chromosome XIV and its evolutionary implications.</title>
        <authorList>
            <person name="Philippsen P."/>
            <person name="Kleine K."/>
            <person name="Poehlmann R."/>
            <person name="Duesterhoeft A."/>
            <person name="Hamberg K."/>
            <person name="Hegemann J.H."/>
            <person name="Obermaier B."/>
            <person name="Urrestarazu L.A."/>
            <person name="Aert R."/>
            <person name="Albermann K."/>
            <person name="Altmann R."/>
            <person name="Andre B."/>
            <person name="Baladron V."/>
            <person name="Ballesta J.P.G."/>
            <person name="Becam A.-M."/>
            <person name="Beinhauer J.D."/>
            <person name="Boskovic J."/>
            <person name="Buitrago M.J."/>
            <person name="Bussereau F."/>
            <person name="Coster F."/>
            <person name="Crouzet M."/>
            <person name="D'Angelo M."/>
            <person name="Dal Pero F."/>
            <person name="De Antoni A."/>
            <person name="del Rey F."/>
            <person name="Doignon F."/>
            <person name="Domdey H."/>
            <person name="Dubois E."/>
            <person name="Fiedler T.A."/>
            <person name="Fleig U."/>
            <person name="Floeth M."/>
            <person name="Fritz C."/>
            <person name="Gaillardin C."/>
            <person name="Garcia-Cantalejo J.M."/>
            <person name="Glansdorff N."/>
            <person name="Goffeau A."/>
            <person name="Gueldener U."/>
            <person name="Herbert C.J."/>
            <person name="Heumann K."/>
            <person name="Heuss-Neitzel D."/>
            <person name="Hilbert H."/>
            <person name="Hinni K."/>
            <person name="Iraqui Houssaini I."/>
            <person name="Jacquet M."/>
            <person name="Jimenez A."/>
            <person name="Jonniaux J.-L."/>
            <person name="Karpfinger-Hartl L."/>
            <person name="Lanfranchi G."/>
            <person name="Lepingle A."/>
            <person name="Levesque H."/>
            <person name="Lyck R."/>
            <person name="Maftahi M."/>
            <person name="Mallet L."/>
            <person name="Maurer C.T.C."/>
            <person name="Messenguy F."/>
            <person name="Mewes H.-W."/>
            <person name="Moestl D."/>
            <person name="Nasr F."/>
            <person name="Nicaud J.-M."/>
            <person name="Niedenthal R.K."/>
            <person name="Pandolfo D."/>
            <person name="Pierard A."/>
            <person name="Piravandi E."/>
            <person name="Planta R.J."/>
            <person name="Pohl T.M."/>
            <person name="Purnelle B."/>
            <person name="Rebischung C."/>
            <person name="Remacha M.A."/>
            <person name="Revuelta J.L."/>
            <person name="Rinke M."/>
            <person name="Saiz J.E."/>
            <person name="Sartorello F."/>
            <person name="Scherens B."/>
            <person name="Sen-Gupta M."/>
            <person name="Soler-Mira A."/>
            <person name="Urbanus J.H.M."/>
            <person name="Valle G."/>
            <person name="Van Dyck L."/>
            <person name="Verhasselt P."/>
            <person name="Vierendeels F."/>
            <person name="Vissers S."/>
            <person name="Voet M."/>
            <person name="Volckaert G."/>
            <person name="Wach A."/>
            <person name="Wambutt R."/>
            <person name="Wedler H."/>
            <person name="Zollner A."/>
            <person name="Hani J."/>
        </authorList>
    </citation>
    <scope>NUCLEOTIDE SEQUENCE [LARGE SCALE GENOMIC DNA]</scope>
    <source>
        <strain>ATCC 204508 / S288c</strain>
    </source>
</reference>
<reference key="3">
    <citation type="journal article" date="2014" name="G3 (Bethesda)">
        <title>The reference genome sequence of Saccharomyces cerevisiae: Then and now.</title>
        <authorList>
            <person name="Engel S.R."/>
            <person name="Dietrich F.S."/>
            <person name="Fisk D.G."/>
            <person name="Binkley G."/>
            <person name="Balakrishnan R."/>
            <person name="Costanzo M.C."/>
            <person name="Dwight S.S."/>
            <person name="Hitz B.C."/>
            <person name="Karra K."/>
            <person name="Nash R.S."/>
            <person name="Weng S."/>
            <person name="Wong E.D."/>
            <person name="Lloyd P."/>
            <person name="Skrzypek M.S."/>
            <person name="Miyasato S.R."/>
            <person name="Simison M."/>
            <person name="Cherry J.M."/>
        </authorList>
    </citation>
    <scope>GENOME REANNOTATION</scope>
    <source>
        <strain>ATCC 204508 / S288c</strain>
    </source>
</reference>
<reference key="4">
    <citation type="journal article" date="2003" name="EMBO J.">
        <title>The path from nucleolar 90S to cytoplasmic 40S pre-ribosomes.</title>
        <authorList>
            <person name="Schaefer T."/>
            <person name="Strauss D."/>
            <person name="Petfalski E."/>
            <person name="Tollervey D."/>
            <person name="Hurt E."/>
        </authorList>
    </citation>
    <scope>FUNCTION</scope>
    <scope>INTERACTION WITH TSR1</scope>
    <scope>SUBCELLULAR LOCATION</scope>
    <scope>MUTAGENESIS OF TYR-73; ILE-186; TYR-210; GLU-364; ASP-371 AND ASP-417</scope>
</reference>
<reference key="5">
    <citation type="journal article" date="2003" name="J. Biol. Chem.">
        <title>Rio2p, an evolutionarily conserved, low abundant protein kinase essential for processing of 20 S pre-rRNA in Saccharomyces cerevisiae.</title>
        <authorList>
            <person name="Geerlings T.H."/>
            <person name="Faber A.W."/>
            <person name="Bister M.D."/>
            <person name="Vos J.C."/>
            <person name="Raue H.A."/>
        </authorList>
    </citation>
    <scope>FUNCTION</scope>
    <scope>CATALYTIC ACTIVITY</scope>
    <scope>COFACTOR</scope>
    <scope>SUBCELLULAR LOCATION</scope>
    <scope>PHOSPHORYLATION</scope>
    <scope>MUTAGENESIS OF LYS-105; HIS-227 AND ASP-229</scope>
</reference>
<reference key="6">
    <citation type="journal article" date="2003" name="Mol. Cell. Biol.">
        <title>Late cytoplasmic maturation of the small ribosomal subunit requires RIO proteins in Saccharomyces cerevisiae.</title>
        <authorList>
            <person name="Vanrobays E."/>
            <person name="Gelugne J.-P."/>
            <person name="Gleizes P.-E."/>
            <person name="Caizergues-Ferrer M."/>
        </authorList>
    </citation>
    <scope>FUNCTION</scope>
    <scope>SUBCELLULAR LOCATION</scope>
</reference>
<reference key="7">
    <citation type="journal article" date="2003" name="Nature">
        <title>Global analysis of protein expression in yeast.</title>
        <authorList>
            <person name="Ghaemmaghami S."/>
            <person name="Huh W.-K."/>
            <person name="Bower K."/>
            <person name="Howson R.W."/>
            <person name="Belle A."/>
            <person name="Dephoure N."/>
            <person name="O'Shea E.K."/>
            <person name="Weissman J.S."/>
        </authorList>
    </citation>
    <scope>LEVEL OF PROTEIN EXPRESSION [LARGE SCALE ANALYSIS]</scope>
</reference>
<reference key="8">
    <citation type="journal article" date="2004" name="EMBO J.">
        <title>The ribosomal protein Rps15p is required for nuclear exit of the 40S subunit precursors in yeast.</title>
        <authorList>
            <person name="Leger-Silvestre I."/>
            <person name="Milkereit P."/>
            <person name="Ferreira-Cerca S."/>
            <person name="Saveanu C."/>
            <person name="Rousselle J.-C."/>
            <person name="Choesmel V."/>
            <person name="Guinefoleau C."/>
            <person name="Gas N."/>
            <person name="Gleizes P.-E."/>
        </authorList>
    </citation>
    <scope>FUNCTION</scope>
    <scope>SUBCELLULAR LOCATION</scope>
</reference>
<reference key="9">
    <citation type="journal article" date="2005" name="J. Biol. Chem.">
        <title>Specific role for yeast homologs of the Diamond Blackfan anemia-associated Rps19 protein in ribosome synthesis.</title>
        <authorList>
            <person name="Leger-Silvestre I."/>
            <person name="Caffrey J.M."/>
            <person name="Dawaliby R."/>
            <person name="Alvarez-Arias D.A."/>
            <person name="Gas N."/>
            <person name="Bertolone S.J."/>
            <person name="Gleizes P.E."/>
            <person name="Ellis S.R."/>
        </authorList>
    </citation>
    <scope>FUNCTION</scope>
    <scope>SUBCELLULAR LOCATION</scope>
</reference>
<reference key="10">
    <citation type="journal article" date="2006" name="Nature">
        <title>Hrr25-dependent phosphorylation state regulates organization of the pre-40S subunit.</title>
        <authorList>
            <person name="Schaefer T."/>
            <person name="Maco B."/>
            <person name="Petfalski E."/>
            <person name="Tollervey D."/>
            <person name="Boettcher B."/>
            <person name="Aebi U."/>
            <person name="Hurt E."/>
        </authorList>
    </citation>
    <scope>IDENTIFICATION IN PRE-40S PARTICLE</scope>
    <scope>IDENTIFICATION BY MASS SPECTROMETRY</scope>
</reference>
<reference key="11">
    <citation type="journal article" date="2008" name="Mol. Cell. Proteomics">
        <title>A multidimensional chromatography technology for in-depth phosphoproteome analysis.</title>
        <authorList>
            <person name="Albuquerque C.P."/>
            <person name="Smolka M.B."/>
            <person name="Payne S.H."/>
            <person name="Bafna V."/>
            <person name="Eng J."/>
            <person name="Zhou H."/>
        </authorList>
    </citation>
    <scope>PHOSPHORYLATION [LARGE SCALE ANALYSIS] AT SER-346</scope>
    <scope>IDENTIFICATION BY MASS SPECTROMETRY [LARGE SCALE ANALYSIS]</scope>
</reference>
<accession>P40160</accession>
<accession>D6W0Y3</accession>
<sequence length="425" mass="49125">MKLDTSHMRYLTTDDFRVLQAVEQGSRSHEVVPTPLIHQISGMRSQSGTNRAISDLAKLSLISKMRNVKYDGYRLTYNGIDYLALKTMLNRDTVYSVGNTIGVGKESDIYKVSDKNGNPRVMKIHRLGRTSFHSVRNNRDYLKKSNQGANWMHLSRLAANKEYQFMSMLYSKGFKVPEPFDNSRHIVVMELIEGYPMRRLRKHKNIPKLYSDLMCFIVDLANSGLIHCDFNEFNIMIKDKLEDENDCGFVVIDFPQCISIQHQDADYYFQRDVDCIRRFFKKKLKYEPKPDSSMLDTEGFGDGYKYAYPDFKRDVKRTDNLDELVQASGFSKKHPGDRGLETAVESMRNAVYNSDDDMSNDEAEEENGEGDYSEEDEYYDSELDNESSEDDSEDAQEEENERIIEALSSGVENLKMDKLGNYILE</sequence>
<dbReference type="EC" id="2.7.11.1" evidence="5"/>
<dbReference type="EMBL" id="X78898">
    <property type="protein sequence ID" value="CAA55501.1"/>
    <property type="molecule type" value="Genomic_DNA"/>
</dbReference>
<dbReference type="EMBL" id="Z71483">
    <property type="protein sequence ID" value="CAA96109.1"/>
    <property type="molecule type" value="Genomic_DNA"/>
</dbReference>
<dbReference type="EMBL" id="BK006947">
    <property type="protein sequence ID" value="DAA10349.1"/>
    <property type="molecule type" value="Genomic_DNA"/>
</dbReference>
<dbReference type="PIR" id="S50724">
    <property type="entry name" value="S50724"/>
</dbReference>
<dbReference type="RefSeq" id="NP_014192.1">
    <property type="nucleotide sequence ID" value="NM_001183045.1"/>
</dbReference>
<dbReference type="PDB" id="6EML">
    <property type="method" value="EM"/>
    <property type="resolution" value="3.60 A"/>
    <property type="chains" value="r=1-425"/>
</dbReference>
<dbReference type="PDB" id="6FAI">
    <property type="method" value="EM"/>
    <property type="resolution" value="3.40 A"/>
    <property type="chains" value="l=1-425"/>
</dbReference>
<dbReference type="PDB" id="6RBD">
    <property type="method" value="EM"/>
    <property type="resolution" value="3.47 A"/>
    <property type="chains" value="l=1-425"/>
</dbReference>
<dbReference type="PDB" id="6Y7C">
    <property type="method" value="EM"/>
    <property type="resolution" value="3.80 A"/>
    <property type="chains" value="l=1-425"/>
</dbReference>
<dbReference type="PDB" id="8C00">
    <property type="method" value="EM"/>
    <property type="resolution" value="2.90 A"/>
    <property type="chains" value="r=1-425"/>
</dbReference>
<dbReference type="PDB" id="8C01">
    <property type="method" value="EM"/>
    <property type="resolution" value="2.70 A"/>
    <property type="chains" value="r=1-425"/>
</dbReference>
<dbReference type="PDB" id="8CBJ">
    <property type="method" value="EM"/>
    <property type="resolution" value="3.80 A"/>
    <property type="chains" value="l=1-425"/>
</dbReference>
<dbReference type="PDBsum" id="6EML"/>
<dbReference type="PDBsum" id="6FAI"/>
<dbReference type="PDBsum" id="6RBD"/>
<dbReference type="PDBsum" id="6Y7C"/>
<dbReference type="PDBsum" id="8C00"/>
<dbReference type="PDBsum" id="8C01"/>
<dbReference type="PDBsum" id="8CBJ"/>
<dbReference type="EMDB" id="EMD-10713"/>
<dbReference type="EMDB" id="EMD-16347"/>
<dbReference type="EMDB" id="EMD-16349"/>
<dbReference type="EMDB" id="EMD-4214"/>
<dbReference type="EMDB" id="EMD-4792"/>
<dbReference type="SMR" id="P40160"/>
<dbReference type="BioGRID" id="35629">
    <property type="interactions" value="241"/>
</dbReference>
<dbReference type="DIP" id="DIP-4894N"/>
<dbReference type="FunCoup" id="P40160">
    <property type="interactions" value="1491"/>
</dbReference>
<dbReference type="IntAct" id="P40160">
    <property type="interactions" value="79"/>
</dbReference>
<dbReference type="MINT" id="P40160"/>
<dbReference type="STRING" id="4932.YNL207W"/>
<dbReference type="iPTMnet" id="P40160"/>
<dbReference type="PaxDb" id="4932-YNL207W"/>
<dbReference type="PeptideAtlas" id="P40160"/>
<dbReference type="EnsemblFungi" id="YNL207W_mRNA">
    <property type="protein sequence ID" value="YNL207W"/>
    <property type="gene ID" value="YNL207W"/>
</dbReference>
<dbReference type="GeneID" id="855514"/>
<dbReference type="KEGG" id="sce:YNL207W"/>
<dbReference type="AGR" id="SGD:S000005151"/>
<dbReference type="SGD" id="S000005151">
    <property type="gene designation" value="RIO2"/>
</dbReference>
<dbReference type="VEuPathDB" id="FungiDB:YNL207W"/>
<dbReference type="eggNOG" id="KOG2268">
    <property type="taxonomic scope" value="Eukaryota"/>
</dbReference>
<dbReference type="GeneTree" id="ENSGT00390000003255"/>
<dbReference type="HOGENOM" id="CLU_018693_0_0_1"/>
<dbReference type="InParanoid" id="P40160"/>
<dbReference type="OMA" id="GYTNFRE"/>
<dbReference type="OrthoDB" id="10258631at2759"/>
<dbReference type="BioCyc" id="YEAST:G3O-33213-MONOMER"/>
<dbReference type="BioGRID-ORCS" id="855514">
    <property type="hits" value="1 hit in 13 CRISPR screens"/>
</dbReference>
<dbReference type="CD-CODE" id="E03F929F">
    <property type="entry name" value="Stress granule"/>
</dbReference>
<dbReference type="PRO" id="PR:P40160"/>
<dbReference type="Proteomes" id="UP000002311">
    <property type="component" value="Chromosome XIV"/>
</dbReference>
<dbReference type="RNAct" id="P40160">
    <property type="molecule type" value="protein"/>
</dbReference>
<dbReference type="GO" id="GO:0005737">
    <property type="term" value="C:cytoplasm"/>
    <property type="evidence" value="ECO:0000314"/>
    <property type="project" value="SGD"/>
</dbReference>
<dbReference type="GO" id="GO:0010494">
    <property type="term" value="C:cytoplasmic stress granule"/>
    <property type="evidence" value="ECO:0007005"/>
    <property type="project" value="SGD"/>
</dbReference>
<dbReference type="GO" id="GO:0005829">
    <property type="term" value="C:cytosol"/>
    <property type="evidence" value="ECO:0000314"/>
    <property type="project" value="SGD"/>
</dbReference>
<dbReference type="GO" id="GO:0005634">
    <property type="term" value="C:nucleus"/>
    <property type="evidence" value="ECO:0000314"/>
    <property type="project" value="SGD"/>
</dbReference>
<dbReference type="GO" id="GO:0030688">
    <property type="term" value="C:preribosome, small subunit precursor"/>
    <property type="evidence" value="ECO:0000318"/>
    <property type="project" value="GO_Central"/>
</dbReference>
<dbReference type="GO" id="GO:0005524">
    <property type="term" value="F:ATP binding"/>
    <property type="evidence" value="ECO:0007669"/>
    <property type="project" value="UniProtKB-KW"/>
</dbReference>
<dbReference type="GO" id="GO:0046872">
    <property type="term" value="F:metal ion binding"/>
    <property type="evidence" value="ECO:0007669"/>
    <property type="project" value="UniProtKB-KW"/>
</dbReference>
<dbReference type="GO" id="GO:0004672">
    <property type="term" value="F:protein kinase activity"/>
    <property type="evidence" value="ECO:0000314"/>
    <property type="project" value="SGD"/>
</dbReference>
<dbReference type="GO" id="GO:0106310">
    <property type="term" value="F:protein serine kinase activity"/>
    <property type="evidence" value="ECO:0007669"/>
    <property type="project" value="RHEA"/>
</dbReference>
<dbReference type="GO" id="GO:0004674">
    <property type="term" value="F:protein serine/threonine kinase activity"/>
    <property type="evidence" value="ECO:0007669"/>
    <property type="project" value="UniProtKB-KW"/>
</dbReference>
<dbReference type="GO" id="GO:0030490">
    <property type="term" value="P:maturation of SSU-rRNA"/>
    <property type="evidence" value="ECO:0000318"/>
    <property type="project" value="GO_Central"/>
</dbReference>
<dbReference type="GO" id="GO:0000462">
    <property type="term" value="P:maturation of SSU-rRNA from tricistronic rRNA transcript (SSU-rRNA, 5.8S rRNA, LSU-rRNA)"/>
    <property type="evidence" value="ECO:0000315"/>
    <property type="project" value="GO_Central"/>
</dbReference>
<dbReference type="GO" id="GO:0046830">
    <property type="term" value="P:positive regulation of RNA import into nucleus"/>
    <property type="evidence" value="ECO:0000315"/>
    <property type="project" value="SGD"/>
</dbReference>
<dbReference type="CDD" id="cd05144">
    <property type="entry name" value="RIO2_C"/>
    <property type="match status" value="1"/>
</dbReference>
<dbReference type="FunFam" id="1.10.10.10:FF:000053">
    <property type="entry name" value="Serine/threonine-protein kinase RIO2"/>
    <property type="match status" value="1"/>
</dbReference>
<dbReference type="FunFam" id="3.30.200.20:FF:000052">
    <property type="entry name" value="Serine/threonine-protein kinase RIO2"/>
    <property type="match status" value="1"/>
</dbReference>
<dbReference type="FunFam" id="1.10.510.10:FF:000566">
    <property type="entry name" value="Serine/threonine-protein kinase rio2"/>
    <property type="match status" value="1"/>
</dbReference>
<dbReference type="Gene3D" id="3.30.200.20">
    <property type="entry name" value="Phosphorylase Kinase, domain 1"/>
    <property type="match status" value="1"/>
</dbReference>
<dbReference type="Gene3D" id="1.10.510.10">
    <property type="entry name" value="Transferase(Phosphotransferase) domain 1"/>
    <property type="match status" value="1"/>
</dbReference>
<dbReference type="Gene3D" id="1.10.10.10">
    <property type="entry name" value="Winged helix-like DNA-binding domain superfamily/Winged helix DNA-binding domain"/>
    <property type="match status" value="1"/>
</dbReference>
<dbReference type="InterPro" id="IPR011009">
    <property type="entry name" value="Kinase-like_dom_sf"/>
</dbReference>
<dbReference type="InterPro" id="IPR030484">
    <property type="entry name" value="Rio2"/>
</dbReference>
<dbReference type="InterPro" id="IPR015285">
    <property type="entry name" value="RIO2_wHTH_N"/>
</dbReference>
<dbReference type="InterPro" id="IPR018934">
    <property type="entry name" value="RIO_dom"/>
</dbReference>
<dbReference type="InterPro" id="IPR000687">
    <property type="entry name" value="RIO_kinase"/>
</dbReference>
<dbReference type="InterPro" id="IPR036388">
    <property type="entry name" value="WH-like_DNA-bd_sf"/>
</dbReference>
<dbReference type="InterPro" id="IPR036390">
    <property type="entry name" value="WH_DNA-bd_sf"/>
</dbReference>
<dbReference type="PANTHER" id="PTHR45852">
    <property type="entry name" value="SER/THR-PROTEIN KINASE RIO2"/>
    <property type="match status" value="1"/>
</dbReference>
<dbReference type="PANTHER" id="PTHR45852:SF1">
    <property type="entry name" value="SERINE_THREONINE-PROTEIN KINASE RIO2"/>
    <property type="match status" value="1"/>
</dbReference>
<dbReference type="Pfam" id="PF01163">
    <property type="entry name" value="RIO1"/>
    <property type="match status" value="1"/>
</dbReference>
<dbReference type="Pfam" id="PF09202">
    <property type="entry name" value="Rio2_N"/>
    <property type="match status" value="1"/>
</dbReference>
<dbReference type="SMART" id="SM00090">
    <property type="entry name" value="RIO"/>
    <property type="match status" value="1"/>
</dbReference>
<dbReference type="SUPFAM" id="SSF56112">
    <property type="entry name" value="Protein kinase-like (PK-like)"/>
    <property type="match status" value="1"/>
</dbReference>
<dbReference type="SUPFAM" id="SSF46785">
    <property type="entry name" value="Winged helix' DNA-binding domain"/>
    <property type="match status" value="1"/>
</dbReference>
<name>RIO2_YEAST</name>
<evidence type="ECO:0000250" key="1"/>
<evidence type="ECO:0000256" key="2">
    <source>
        <dbReference type="SAM" id="MobiDB-lite"/>
    </source>
</evidence>
<evidence type="ECO:0000269" key="3">
    <source>
    </source>
</evidence>
<evidence type="ECO:0000269" key="4">
    <source>
    </source>
</evidence>
<evidence type="ECO:0000269" key="5">
    <source>
    </source>
</evidence>
<evidence type="ECO:0000269" key="6">
    <source>
    </source>
</evidence>
<evidence type="ECO:0000269" key="7">
    <source>
    </source>
</evidence>
<evidence type="ECO:0000269" key="8">
    <source>
    </source>
</evidence>
<evidence type="ECO:0000269" key="9">
    <source>
    </source>
</evidence>
<evidence type="ECO:0000305" key="10"/>
<evidence type="ECO:0007744" key="11">
    <source>
    </source>
</evidence>
<evidence type="ECO:0007829" key="12">
    <source>
        <dbReference type="PDB" id="6FAI"/>
    </source>
</evidence>
<evidence type="ECO:0007829" key="13">
    <source>
        <dbReference type="PDB" id="8C01"/>
    </source>
</evidence>
<protein>
    <recommendedName>
        <fullName>Serine/threonine-protein kinase RIO2</fullName>
        <ecNumber evidence="5">2.7.11.1</ecNumber>
    </recommendedName>
</protein>
<comment type="function">
    <text evidence="3 4 5 7 8">Required for the final endonucleolytic cleavage of 20S pre-rRNA at site D in the cytoplasm, converting it into the mature 18S rRNA. Involved in normal export of the pre-40S particles from the nucleus to the cytoplasm. No longer associates with pre-40S subunits in RPS19 disruptions, suggesting it acts after the ribosomal protein in 18S rRNA maturation.</text>
</comment>
<comment type="catalytic activity">
    <reaction evidence="5">
        <text>L-seryl-[protein] + ATP = O-phospho-L-seryl-[protein] + ADP + H(+)</text>
        <dbReference type="Rhea" id="RHEA:17989"/>
        <dbReference type="Rhea" id="RHEA-COMP:9863"/>
        <dbReference type="Rhea" id="RHEA-COMP:11604"/>
        <dbReference type="ChEBI" id="CHEBI:15378"/>
        <dbReference type="ChEBI" id="CHEBI:29999"/>
        <dbReference type="ChEBI" id="CHEBI:30616"/>
        <dbReference type="ChEBI" id="CHEBI:83421"/>
        <dbReference type="ChEBI" id="CHEBI:456216"/>
        <dbReference type="EC" id="2.7.11.1"/>
    </reaction>
</comment>
<comment type="catalytic activity">
    <reaction evidence="5">
        <text>L-threonyl-[protein] + ATP = O-phospho-L-threonyl-[protein] + ADP + H(+)</text>
        <dbReference type="Rhea" id="RHEA:46608"/>
        <dbReference type="Rhea" id="RHEA-COMP:11060"/>
        <dbReference type="Rhea" id="RHEA-COMP:11605"/>
        <dbReference type="ChEBI" id="CHEBI:15378"/>
        <dbReference type="ChEBI" id="CHEBI:30013"/>
        <dbReference type="ChEBI" id="CHEBI:30616"/>
        <dbReference type="ChEBI" id="CHEBI:61977"/>
        <dbReference type="ChEBI" id="CHEBI:456216"/>
        <dbReference type="EC" id="2.7.11.1"/>
    </reaction>
</comment>
<comment type="cofactor">
    <cofactor evidence="5">
        <name>Mg(2+)</name>
        <dbReference type="ChEBI" id="CHEBI:18420"/>
    </cofactor>
</comment>
<comment type="subunit">
    <text evidence="9">Component of a late pre-40S ribosomal particle, composed of the 40S ribosomal proteins and the non-ribosomal factors DIM1, DIM2, ENP1, HRR25, LTV1, NOB1, RIO2 and TSR1.</text>
</comment>
<comment type="interaction">
    <interactant intactId="EBI-29124">
        <id>P40160</id>
    </interactant>
    <interactant intactId="EBI-10248">
        <id>P34078</id>
        <label>LTV1</label>
    </interactant>
    <organismsDiffer>false</organismsDiffer>
    <experiments>5</experiments>
</comment>
<comment type="interaction">
    <interactant intactId="EBI-29124">
        <id>P40160</id>
    </interactant>
    <interactant intactId="EBI-16140">
        <id>P05750</id>
        <label>RPS3</label>
    </interactant>
    <organismsDiffer>false</organismsDiffer>
    <experiments>3</experiments>
</comment>
<comment type="subcellular location">
    <subcellularLocation>
        <location>Cytoplasm</location>
    </subcellularLocation>
    <subcellularLocation>
        <location>Nucleus</location>
    </subcellularLocation>
    <text>Predominantly cytoplasmic.</text>
</comment>
<comment type="PTM">
    <text evidence="5">Autophosphorylated.</text>
</comment>
<comment type="miscellaneous">
    <text evidence="6">Present with 10300 molecules/cell in log phase SD medium.</text>
</comment>
<comment type="similarity">
    <text evidence="10">Belongs to the protein kinase superfamily. RIO-type Ser/Thr kinase family.</text>
</comment>